<protein>
    <recommendedName>
        <fullName>Choriogonadotropin subunit beta</fullName>
        <shortName>CG-beta</shortName>
    </recommendedName>
    <alternativeName>
        <fullName>Chorionic gonadotrophin chain beta</fullName>
    </alternativeName>
</protein>
<name>CGHB_SAIBB</name>
<dbReference type="EMBL" id="DQ174773">
    <property type="protein sequence ID" value="ABA00515.1"/>
    <property type="molecule type" value="mRNA"/>
</dbReference>
<dbReference type="SMR" id="Q3S2X5"/>
<dbReference type="STRING" id="39432.ENSSBOP00000040430"/>
<dbReference type="GlyCosmos" id="Q3S2X5">
    <property type="glycosylation" value="5 sites, No reported glycans"/>
</dbReference>
<dbReference type="Ensembl" id="ENSSBOT00000057397.1">
    <property type="protein sequence ID" value="ENSSBOP00000040431.1"/>
    <property type="gene ID" value="ENSSBOG00000036196.1"/>
</dbReference>
<dbReference type="GeneTree" id="ENSGT00940000163162"/>
<dbReference type="OMA" id="FYIQAKN"/>
<dbReference type="Proteomes" id="UP000233220">
    <property type="component" value="Unplaced"/>
</dbReference>
<dbReference type="GO" id="GO:0005737">
    <property type="term" value="C:cytoplasm"/>
    <property type="evidence" value="ECO:0007669"/>
    <property type="project" value="TreeGrafter"/>
</dbReference>
<dbReference type="GO" id="GO:0005615">
    <property type="term" value="C:extracellular space"/>
    <property type="evidence" value="ECO:0007669"/>
    <property type="project" value="TreeGrafter"/>
</dbReference>
<dbReference type="GO" id="GO:0005179">
    <property type="term" value="F:hormone activity"/>
    <property type="evidence" value="ECO:0007669"/>
    <property type="project" value="UniProtKB-KW"/>
</dbReference>
<dbReference type="GO" id="GO:0007186">
    <property type="term" value="P:G protein-coupled receptor signaling pathway"/>
    <property type="evidence" value="ECO:0007669"/>
    <property type="project" value="TreeGrafter"/>
</dbReference>
<dbReference type="CDD" id="cd00069">
    <property type="entry name" value="GHB_like"/>
    <property type="match status" value="1"/>
</dbReference>
<dbReference type="FunFam" id="2.10.90.10:FF:000007">
    <property type="entry name" value="Luteinizing hormone beta subunit"/>
    <property type="match status" value="1"/>
</dbReference>
<dbReference type="Gene3D" id="2.10.90.10">
    <property type="entry name" value="Cystine-knot cytokines"/>
    <property type="match status" value="1"/>
</dbReference>
<dbReference type="InterPro" id="IPR029034">
    <property type="entry name" value="Cystine-knot_cytokine"/>
</dbReference>
<dbReference type="InterPro" id="IPR006208">
    <property type="entry name" value="Glyco_hormone_CN"/>
</dbReference>
<dbReference type="InterPro" id="IPR001545">
    <property type="entry name" value="Gonadotropin_bsu"/>
</dbReference>
<dbReference type="InterPro" id="IPR018245">
    <property type="entry name" value="Gonadotropin_bsu_CS"/>
</dbReference>
<dbReference type="PANTHER" id="PTHR11515">
    <property type="entry name" value="GLYCOPROTEIN HORMONE BETA CHAIN"/>
    <property type="match status" value="1"/>
</dbReference>
<dbReference type="PANTHER" id="PTHR11515:SF11">
    <property type="entry name" value="LUTROPIN SUBUNIT BETA"/>
    <property type="match status" value="1"/>
</dbReference>
<dbReference type="Pfam" id="PF00007">
    <property type="entry name" value="Cys_knot"/>
    <property type="match status" value="1"/>
</dbReference>
<dbReference type="SMART" id="SM00068">
    <property type="entry name" value="GHB"/>
    <property type="match status" value="1"/>
</dbReference>
<dbReference type="SUPFAM" id="SSF57501">
    <property type="entry name" value="Cystine-knot cytokines"/>
    <property type="match status" value="1"/>
</dbReference>
<dbReference type="PROSITE" id="PS00261">
    <property type="entry name" value="GLYCO_HORMONE_BETA_1"/>
    <property type="match status" value="1"/>
</dbReference>
<comment type="function">
    <text evidence="1">Stimulates the ovaries to synthesize the steroids that are essential for the maintenance of pregnancy.</text>
</comment>
<comment type="subunit">
    <text evidence="1">Heterodimer of a common alpha chain and a unique beta chain which confers biological specificity to thyrotropin, lutropin, follitropin and gonadotropin.</text>
</comment>
<comment type="subcellular location">
    <subcellularLocation>
        <location evidence="1">Secreted</location>
    </subcellularLocation>
</comment>
<comment type="similarity">
    <text evidence="4">Belongs to the glycoprotein hormones subunit beta family.</text>
</comment>
<organism>
    <name type="scientific">Saimiri boliviensis boliviensis</name>
    <name type="common">Bolivian squirrel monkey</name>
    <dbReference type="NCBI Taxonomy" id="39432"/>
    <lineage>
        <taxon>Eukaryota</taxon>
        <taxon>Metazoa</taxon>
        <taxon>Chordata</taxon>
        <taxon>Craniata</taxon>
        <taxon>Vertebrata</taxon>
        <taxon>Euteleostomi</taxon>
        <taxon>Mammalia</taxon>
        <taxon>Eutheria</taxon>
        <taxon>Euarchontoglires</taxon>
        <taxon>Primates</taxon>
        <taxon>Haplorrhini</taxon>
        <taxon>Platyrrhini</taxon>
        <taxon>Cebidae</taxon>
        <taxon>Saimiriinae</taxon>
        <taxon>Saimiri</taxon>
    </lineage>
</organism>
<keyword id="KW-1015">Disulfide bond</keyword>
<keyword id="KW-0325">Glycoprotein</keyword>
<keyword id="KW-0372">Hormone</keyword>
<keyword id="KW-1185">Reference proteome</keyword>
<keyword id="KW-0964">Secreted</keyword>
<keyword id="KW-0732">Signal</keyword>
<sequence length="163" mass="17704">MEMLQGLLLCLLLSTGGAWASKEPLRPPCRPTNVILAVEKEGCPVCVPFNTTICAGYCSSMVRVMQTLPPLPQTVCNYHELRFTSVRLPGCRRGVDPVVYMPMAVSCRCALCRRSYSDCGSFRNESLGCDYATSQDSSSNVPPSNLTSPSQLLEPAVTPLVPQ</sequence>
<gene>
    <name type="primary">CGB</name>
</gene>
<accession>Q3S2X5</accession>
<feature type="signal peptide" evidence="1">
    <location>
        <begin position="1"/>
        <end position="20"/>
    </location>
</feature>
<feature type="chain" id="PRO_0000253469" description="Choriogonadotropin subunit beta">
    <location>
        <begin position="21"/>
        <end position="163"/>
    </location>
</feature>
<feature type="region of interest" description="Disordered" evidence="3">
    <location>
        <begin position="135"/>
        <end position="163"/>
    </location>
</feature>
<feature type="compositionally biased region" description="Polar residues" evidence="3">
    <location>
        <begin position="135"/>
        <end position="151"/>
    </location>
</feature>
<feature type="glycosylation site" description="N-linked (GlcNAc...) asparagine" evidence="2">
    <location>
        <position position="50"/>
    </location>
</feature>
<feature type="glycosylation site" description="N-linked (GlcNAc...) asparagine" evidence="2">
    <location>
        <position position="124"/>
    </location>
</feature>
<feature type="glycosylation site" description="O-linked (GalNAc...) serine" evidence="1">
    <location>
        <position position="139"/>
    </location>
</feature>
<feature type="glycosylation site" description="N-linked (GlcNAc...) asparagine" evidence="2">
    <location>
        <position position="145"/>
    </location>
</feature>
<feature type="glycosylation site" description="O-linked (GalNAc...) serine" evidence="1">
    <location>
        <position position="150"/>
    </location>
</feature>
<feature type="disulfide bond" evidence="1">
    <location>
        <begin position="29"/>
        <end position="76"/>
    </location>
</feature>
<feature type="disulfide bond" evidence="1">
    <location>
        <begin position="43"/>
        <end position="91"/>
    </location>
</feature>
<feature type="disulfide bond" evidence="1">
    <location>
        <begin position="46"/>
        <end position="129"/>
    </location>
</feature>
<feature type="disulfide bond" evidence="1">
    <location>
        <begin position="54"/>
        <end position="107"/>
    </location>
</feature>
<feature type="disulfide bond" evidence="1">
    <location>
        <begin position="58"/>
        <end position="109"/>
    </location>
</feature>
<feature type="disulfide bond" evidence="1">
    <location>
        <begin position="112"/>
        <end position="119"/>
    </location>
</feature>
<evidence type="ECO:0000250" key="1"/>
<evidence type="ECO:0000255" key="2"/>
<evidence type="ECO:0000256" key="3">
    <source>
        <dbReference type="SAM" id="MobiDB-lite"/>
    </source>
</evidence>
<evidence type="ECO:0000305" key="4"/>
<reference key="1">
    <citation type="journal article" date="2008" name="Gen. Comp. Endocrinol.">
        <title>Molecular cloning of pituitary glycoprotein alpha-subunit and follicle stimulating hormone and chorionic gonadotropin beta-subunits from New World squirrel monkey and owl monkey.</title>
        <authorList>
            <person name="Scammell J.G."/>
            <person name="Funkhouser J.D."/>
            <person name="Moyer F.S."/>
            <person name="Gibson S.V."/>
            <person name="Willis D.L."/>
        </authorList>
    </citation>
    <scope>NUCLEOTIDE SEQUENCE [MRNA]</scope>
</reference>
<proteinExistence type="evidence at transcript level"/>